<name>PSB4_MOUSE</name>
<accession>P99026</accession>
<accession>Q3THC0</accession>
<accession>Q3THI3</accession>
<accession>Q3U0S0</accession>
<accession>Q3UVQ4</accession>
<accession>Q62008</accession>
<accession>Q8BK27</accession>
<accession>Q91VV7</accession>
<keyword id="KW-0002">3D-structure</keyword>
<keyword id="KW-0007">Acetylation</keyword>
<keyword id="KW-0963">Cytoplasm</keyword>
<keyword id="KW-0903">Direct protein sequencing</keyword>
<keyword id="KW-0539">Nucleus</keyword>
<keyword id="KW-0597">Phosphoprotein</keyword>
<keyword id="KW-0647">Proteasome</keyword>
<keyword id="KW-1185">Reference proteome</keyword>
<feature type="propeptide" id="PRO_0000026581" evidence="8 9">
    <location>
        <begin position="1"/>
        <end position="45"/>
    </location>
</feature>
<feature type="chain" id="PRO_0000026582" description="Proteasome subunit beta type-4">
    <location>
        <begin position="46"/>
        <end position="264"/>
    </location>
</feature>
<feature type="modified residue" description="N-acetylmethionine" evidence="1">
    <location>
        <position position="1"/>
    </location>
</feature>
<feature type="modified residue" description="Phosphotyrosine" evidence="1">
    <location>
        <position position="102"/>
    </location>
</feature>
<feature type="sequence conflict" description="In Ref. 2; BAE33781 and 3; AAH08241." evidence="10" ref="2 3">
    <original>A</original>
    <variation>S</variation>
    <location>
        <position position="26"/>
    </location>
</feature>
<feature type="sequence conflict" description="In Ref. 2; BAE33781." evidence="10" ref="2">
    <original>T</original>
    <variation>A</variation>
    <location>
        <position position="27"/>
    </location>
</feature>
<feature type="sequence conflict" description="In Ref. 2; BAE40213." evidence="10" ref="2">
    <original>P</original>
    <variation>H</variation>
    <location>
        <position position="42"/>
    </location>
</feature>
<feature type="sequence conflict" description="In Ref. 2; BAE23215." evidence="10" ref="2">
    <original>E</original>
    <variation>G</variation>
    <location>
        <position position="215"/>
    </location>
</feature>
<feature type="sequence conflict" description="In Ref. 2; BAC36805." evidence="10" ref="2">
    <original>R</original>
    <variation>K</variation>
    <location>
        <position position="224"/>
    </location>
</feature>
<feature type="sequence conflict" description="In Ref. 2; BAE33781." evidence="10" ref="2">
    <original>I</original>
    <variation>V</variation>
    <location>
        <position position="234"/>
    </location>
</feature>
<feature type="strand" evidence="11">
    <location>
        <begin position="51"/>
        <end position="53"/>
    </location>
</feature>
<feature type="strand" evidence="11">
    <location>
        <begin position="56"/>
        <end position="61"/>
    </location>
</feature>
<feature type="strand" evidence="11">
    <location>
        <begin position="64"/>
        <end position="70"/>
    </location>
</feature>
<feature type="strand" evidence="11">
    <location>
        <begin position="73"/>
        <end position="75"/>
    </location>
</feature>
<feature type="strand" evidence="11">
    <location>
        <begin position="78"/>
        <end position="83"/>
    </location>
</feature>
<feature type="strand" evidence="11">
    <location>
        <begin position="87"/>
        <end position="89"/>
    </location>
</feature>
<feature type="strand" evidence="11">
    <location>
        <begin position="91"/>
        <end position="101"/>
    </location>
</feature>
<feature type="helix" evidence="11">
    <location>
        <begin position="102"/>
        <end position="122"/>
    </location>
</feature>
<feature type="helix" evidence="11">
    <location>
        <begin position="130"/>
        <end position="146"/>
    </location>
</feature>
<feature type="strand" evidence="11">
    <location>
        <begin position="153"/>
        <end position="161"/>
    </location>
</feature>
<feature type="strand" evidence="11">
    <location>
        <begin position="164"/>
        <end position="170"/>
    </location>
</feature>
<feature type="strand" evidence="12">
    <location>
        <begin position="172"/>
        <end position="174"/>
    </location>
</feature>
<feature type="strand" evidence="11">
    <location>
        <begin position="176"/>
        <end position="178"/>
    </location>
</feature>
<feature type="strand" evidence="11">
    <location>
        <begin position="180"/>
        <end position="183"/>
    </location>
</feature>
<feature type="helix" evidence="11">
    <location>
        <begin position="187"/>
        <end position="201"/>
    </location>
</feature>
<feature type="helix" evidence="11">
    <location>
        <begin position="207"/>
        <end position="224"/>
    </location>
</feature>
<feature type="strand" evidence="11">
    <location>
        <begin position="232"/>
        <end position="237"/>
    </location>
</feature>
<feature type="strand" evidence="11">
    <location>
        <begin position="242"/>
        <end position="248"/>
    </location>
</feature>
<feature type="helix" evidence="11">
    <location>
        <begin position="255"/>
        <end position="257"/>
    </location>
</feature>
<feature type="turn" evidence="12">
    <location>
        <begin position="258"/>
        <end position="260"/>
    </location>
</feature>
<proteinExistence type="evidence at protein level"/>
<dbReference type="EMBL" id="U65636">
    <property type="protein sequence ID" value="AAC53263.1"/>
    <property type="molecule type" value="mRNA"/>
</dbReference>
<dbReference type="EMBL" id="AK077448">
    <property type="protein sequence ID" value="BAC36805.1"/>
    <property type="molecule type" value="mRNA"/>
</dbReference>
<dbReference type="EMBL" id="AK137044">
    <property type="protein sequence ID" value="BAE23215.1"/>
    <property type="molecule type" value="mRNA"/>
</dbReference>
<dbReference type="EMBL" id="AK156624">
    <property type="protein sequence ID" value="BAE33781.1"/>
    <property type="molecule type" value="mRNA"/>
</dbReference>
<dbReference type="EMBL" id="AK168265">
    <property type="protein sequence ID" value="BAE40213.1"/>
    <property type="molecule type" value="mRNA"/>
</dbReference>
<dbReference type="EMBL" id="AK168340">
    <property type="protein sequence ID" value="BAE40277.1"/>
    <property type="molecule type" value="mRNA"/>
</dbReference>
<dbReference type="EMBL" id="BC008241">
    <property type="protein sequence ID" value="AAH08241.1"/>
    <property type="molecule type" value="mRNA"/>
</dbReference>
<dbReference type="EMBL" id="M74556">
    <property type="protein sequence ID" value="AAA39863.1"/>
    <property type="molecule type" value="mRNA"/>
</dbReference>
<dbReference type="CCDS" id="CCDS17597.1"/>
<dbReference type="RefSeq" id="NP_032971.2">
    <property type="nucleotide sequence ID" value="NM_008945.3"/>
</dbReference>
<dbReference type="PDB" id="3UNB">
    <property type="method" value="X-ray"/>
    <property type="resolution" value="2.90 A"/>
    <property type="chains" value="3/M/a/o=46-264"/>
</dbReference>
<dbReference type="PDB" id="3UNE">
    <property type="method" value="X-ray"/>
    <property type="resolution" value="3.20 A"/>
    <property type="chains" value="3/M/a/o=46-264"/>
</dbReference>
<dbReference type="PDB" id="3UNF">
    <property type="method" value="X-ray"/>
    <property type="resolution" value="2.90 A"/>
    <property type="chains" value="M/a=46-264"/>
</dbReference>
<dbReference type="PDB" id="3UNH">
    <property type="method" value="X-ray"/>
    <property type="resolution" value="3.20 A"/>
    <property type="chains" value="M/a=46-264"/>
</dbReference>
<dbReference type="PDB" id="8YPK">
    <property type="method" value="EM"/>
    <property type="resolution" value="2.70 A"/>
    <property type="chains" value="W/a=1-264"/>
</dbReference>
<dbReference type="PDB" id="8YVP">
    <property type="method" value="EM"/>
    <property type="resolution" value="2.50 A"/>
    <property type="chains" value="W/a=1-264"/>
</dbReference>
<dbReference type="PDBsum" id="3UNB"/>
<dbReference type="PDBsum" id="3UNE"/>
<dbReference type="PDBsum" id="3UNF"/>
<dbReference type="PDBsum" id="3UNH"/>
<dbReference type="PDBsum" id="8YPK"/>
<dbReference type="PDBsum" id="8YVP"/>
<dbReference type="EMDB" id="EMD-39482"/>
<dbReference type="EMDB" id="EMD-39612"/>
<dbReference type="SMR" id="P99026"/>
<dbReference type="BioGRID" id="202420">
    <property type="interactions" value="86"/>
</dbReference>
<dbReference type="CORUM" id="P99026"/>
<dbReference type="DIP" id="DIP-35152N"/>
<dbReference type="FunCoup" id="P99026">
    <property type="interactions" value="3322"/>
</dbReference>
<dbReference type="IntAct" id="P99026">
    <property type="interactions" value="46"/>
</dbReference>
<dbReference type="MINT" id="P99026"/>
<dbReference type="STRING" id="10090.ENSMUSP00000005923"/>
<dbReference type="MEROPS" id="T01.987"/>
<dbReference type="GlyGen" id="P99026">
    <property type="glycosylation" value="2 sites, 1 N-linked glycan (1 site)"/>
</dbReference>
<dbReference type="iPTMnet" id="P99026"/>
<dbReference type="MetOSite" id="P99026"/>
<dbReference type="PhosphoSitePlus" id="P99026"/>
<dbReference type="SwissPalm" id="P99026"/>
<dbReference type="REPRODUCTION-2DPAGE" id="P99026"/>
<dbReference type="CPTAC" id="non-CPTAC-5617"/>
<dbReference type="jPOST" id="P99026"/>
<dbReference type="PaxDb" id="10090-ENSMUSP00000005923"/>
<dbReference type="PeptideAtlas" id="P99026"/>
<dbReference type="ProteomicsDB" id="291761"/>
<dbReference type="Pumba" id="P99026"/>
<dbReference type="Antibodypedia" id="1673">
    <property type="antibodies" value="465 antibodies from 34 providers"/>
</dbReference>
<dbReference type="DNASU" id="19172"/>
<dbReference type="Ensembl" id="ENSMUST00000005923.7">
    <property type="protein sequence ID" value="ENSMUSP00000005923.7"/>
    <property type="gene ID" value="ENSMUSG00000005779.13"/>
</dbReference>
<dbReference type="GeneID" id="19172"/>
<dbReference type="KEGG" id="mmu:19172"/>
<dbReference type="UCSC" id="uc008qhe.2">
    <property type="organism name" value="mouse"/>
</dbReference>
<dbReference type="AGR" id="MGI:1098257"/>
<dbReference type="CTD" id="5692"/>
<dbReference type="MGI" id="MGI:1098257">
    <property type="gene designation" value="Psmb4"/>
</dbReference>
<dbReference type="VEuPathDB" id="HostDB:ENSMUSG00000005779"/>
<dbReference type="eggNOG" id="KOG0185">
    <property type="taxonomic scope" value="Eukaryota"/>
</dbReference>
<dbReference type="GeneTree" id="ENSGT00390000000698"/>
<dbReference type="HOGENOM" id="CLU_072435_2_0_1"/>
<dbReference type="InParanoid" id="P99026"/>
<dbReference type="OMA" id="QPIMRRY"/>
<dbReference type="OrthoDB" id="7854943at2759"/>
<dbReference type="PhylomeDB" id="P99026"/>
<dbReference type="TreeFam" id="TF106220"/>
<dbReference type="Reactome" id="R-MMU-1169091">
    <property type="pathway name" value="Activation of NF-kappaB in B cells"/>
</dbReference>
<dbReference type="Reactome" id="R-MMU-1234176">
    <property type="pathway name" value="Oxygen-dependent proline hydroxylation of Hypoxia-inducible Factor Alpha"/>
</dbReference>
<dbReference type="Reactome" id="R-MMU-1236978">
    <property type="pathway name" value="Cross-presentation of soluble exogenous antigens (endosomes)"/>
</dbReference>
<dbReference type="Reactome" id="R-MMU-174084">
    <property type="pathway name" value="Autodegradation of Cdh1 by Cdh1:APC/C"/>
</dbReference>
<dbReference type="Reactome" id="R-MMU-174154">
    <property type="pathway name" value="APC/C:Cdc20 mediated degradation of Securin"/>
</dbReference>
<dbReference type="Reactome" id="R-MMU-174178">
    <property type="pathway name" value="APC/C:Cdh1 mediated degradation of Cdc20 and other APC/C:Cdh1 targeted proteins in late mitosis/early G1"/>
</dbReference>
<dbReference type="Reactome" id="R-MMU-174184">
    <property type="pathway name" value="Cdc20:Phospho-APC/C mediated degradation of Cyclin A"/>
</dbReference>
<dbReference type="Reactome" id="R-MMU-187577">
    <property type="pathway name" value="SCF(Skp2)-mediated degradation of p27/p21"/>
</dbReference>
<dbReference type="Reactome" id="R-MMU-195253">
    <property type="pathway name" value="Degradation of beta-catenin by the destruction complex"/>
</dbReference>
<dbReference type="Reactome" id="R-MMU-202424">
    <property type="pathway name" value="Downstream TCR signaling"/>
</dbReference>
<dbReference type="Reactome" id="R-MMU-2467813">
    <property type="pathway name" value="Separation of Sister Chromatids"/>
</dbReference>
<dbReference type="Reactome" id="R-MMU-2871837">
    <property type="pathway name" value="FCERI mediated NF-kB activation"/>
</dbReference>
<dbReference type="Reactome" id="R-MMU-349425">
    <property type="pathway name" value="Autodegradation of the E3 ubiquitin ligase COP1"/>
</dbReference>
<dbReference type="Reactome" id="R-MMU-350562">
    <property type="pathway name" value="Regulation of ornithine decarboxylase (ODC)"/>
</dbReference>
<dbReference type="Reactome" id="R-MMU-382556">
    <property type="pathway name" value="ABC-family proteins mediated transport"/>
</dbReference>
<dbReference type="Reactome" id="R-MMU-450408">
    <property type="pathway name" value="AUF1 (hnRNP D0) binds and destabilizes mRNA"/>
</dbReference>
<dbReference type="Reactome" id="R-MMU-4608870">
    <property type="pathway name" value="Asymmetric localization of PCP proteins"/>
</dbReference>
<dbReference type="Reactome" id="R-MMU-4641257">
    <property type="pathway name" value="Degradation of AXIN"/>
</dbReference>
<dbReference type="Reactome" id="R-MMU-4641258">
    <property type="pathway name" value="Degradation of DVL"/>
</dbReference>
<dbReference type="Reactome" id="R-MMU-5358346">
    <property type="pathway name" value="Hedgehog ligand biogenesis"/>
</dbReference>
<dbReference type="Reactome" id="R-MMU-5607761">
    <property type="pathway name" value="Dectin-1 mediated noncanonical NF-kB signaling"/>
</dbReference>
<dbReference type="Reactome" id="R-MMU-5607764">
    <property type="pathway name" value="CLEC7A (Dectin-1) signaling"/>
</dbReference>
<dbReference type="Reactome" id="R-MMU-5610780">
    <property type="pathway name" value="Degradation of GLI1 by the proteasome"/>
</dbReference>
<dbReference type="Reactome" id="R-MMU-5610785">
    <property type="pathway name" value="GLI3 is processed to GLI3R by the proteasome"/>
</dbReference>
<dbReference type="Reactome" id="R-MMU-5632684">
    <property type="pathway name" value="Hedgehog 'on' state"/>
</dbReference>
<dbReference type="Reactome" id="R-MMU-5658442">
    <property type="pathway name" value="Regulation of RAS by GAPs"/>
</dbReference>
<dbReference type="Reactome" id="R-MMU-5668541">
    <property type="pathway name" value="TNFR2 non-canonical NF-kB pathway"/>
</dbReference>
<dbReference type="Reactome" id="R-MMU-5676590">
    <property type="pathway name" value="NIK--&gt;noncanonical NF-kB signaling"/>
</dbReference>
<dbReference type="Reactome" id="R-MMU-5687128">
    <property type="pathway name" value="MAPK6/MAPK4 signaling"/>
</dbReference>
<dbReference type="Reactome" id="R-MMU-5689603">
    <property type="pathway name" value="UCH proteinases"/>
</dbReference>
<dbReference type="Reactome" id="R-MMU-5689880">
    <property type="pathway name" value="Ub-specific processing proteases"/>
</dbReference>
<dbReference type="Reactome" id="R-MMU-68867">
    <property type="pathway name" value="Assembly of the pre-replicative complex"/>
</dbReference>
<dbReference type="Reactome" id="R-MMU-68949">
    <property type="pathway name" value="Orc1 removal from chromatin"/>
</dbReference>
<dbReference type="Reactome" id="R-MMU-69017">
    <property type="pathway name" value="CDK-mediated phosphorylation and removal of Cdc6"/>
</dbReference>
<dbReference type="Reactome" id="R-MMU-69481">
    <property type="pathway name" value="G2/M Checkpoints"/>
</dbReference>
<dbReference type="Reactome" id="R-MMU-69601">
    <property type="pathway name" value="Ubiquitin Mediated Degradation of Phosphorylated Cdc25A"/>
</dbReference>
<dbReference type="Reactome" id="R-MMU-75815">
    <property type="pathway name" value="Ubiquitin-dependent degradation of Cyclin D"/>
</dbReference>
<dbReference type="Reactome" id="R-MMU-8852276">
    <property type="pathway name" value="The role of GTSE1 in G2/M progression after G2 checkpoint"/>
</dbReference>
<dbReference type="Reactome" id="R-MMU-8854050">
    <property type="pathway name" value="FBXL7 down-regulates AURKA during mitotic entry and in early mitosis"/>
</dbReference>
<dbReference type="Reactome" id="R-MMU-8939236">
    <property type="pathway name" value="RUNX1 regulates transcription of genes involved in differentiation of HSCs"/>
</dbReference>
<dbReference type="Reactome" id="R-MMU-8939902">
    <property type="pathway name" value="Regulation of RUNX2 expression and activity"/>
</dbReference>
<dbReference type="Reactome" id="R-MMU-8941858">
    <property type="pathway name" value="Regulation of RUNX3 expression and activity"/>
</dbReference>
<dbReference type="Reactome" id="R-MMU-8948751">
    <property type="pathway name" value="Regulation of PTEN stability and activity"/>
</dbReference>
<dbReference type="Reactome" id="R-MMU-8951664">
    <property type="pathway name" value="Neddylation"/>
</dbReference>
<dbReference type="Reactome" id="R-MMU-9020702">
    <property type="pathway name" value="Interleukin-1 signaling"/>
</dbReference>
<dbReference type="Reactome" id="R-MMU-9755511">
    <property type="pathway name" value="KEAP1-NFE2L2 pathway"/>
</dbReference>
<dbReference type="Reactome" id="R-MMU-9762114">
    <property type="pathway name" value="GSK3B and BTRC:CUL1-mediated-degradation of NFE2L2"/>
</dbReference>
<dbReference type="Reactome" id="R-MMU-983168">
    <property type="pathway name" value="Antigen processing: Ubiquitination &amp; Proteasome degradation"/>
</dbReference>
<dbReference type="Reactome" id="R-MMU-9907900">
    <property type="pathway name" value="Proteasome assembly"/>
</dbReference>
<dbReference type="BioGRID-ORCS" id="19172">
    <property type="hits" value="31 hits in 76 CRISPR screens"/>
</dbReference>
<dbReference type="ChiTaRS" id="Psmb4">
    <property type="organism name" value="mouse"/>
</dbReference>
<dbReference type="EvolutionaryTrace" id="P99026"/>
<dbReference type="PRO" id="PR:P99026"/>
<dbReference type="Proteomes" id="UP000000589">
    <property type="component" value="Chromosome 3"/>
</dbReference>
<dbReference type="RNAct" id="P99026">
    <property type="molecule type" value="protein"/>
</dbReference>
<dbReference type="Bgee" id="ENSMUSG00000005779">
    <property type="expression patterns" value="Expressed in indifferent gonad and 263 other cell types or tissues"/>
</dbReference>
<dbReference type="GO" id="GO:0036064">
    <property type="term" value="C:ciliary basal body"/>
    <property type="evidence" value="ECO:0007669"/>
    <property type="project" value="Ensembl"/>
</dbReference>
<dbReference type="GO" id="GO:0005829">
    <property type="term" value="C:cytosol"/>
    <property type="evidence" value="ECO:0000304"/>
    <property type="project" value="Reactome"/>
</dbReference>
<dbReference type="GO" id="GO:0005739">
    <property type="term" value="C:mitochondrion"/>
    <property type="evidence" value="ECO:0007669"/>
    <property type="project" value="Ensembl"/>
</dbReference>
<dbReference type="GO" id="GO:0005654">
    <property type="term" value="C:nucleoplasm"/>
    <property type="evidence" value="ECO:0000304"/>
    <property type="project" value="Reactome"/>
</dbReference>
<dbReference type="GO" id="GO:0005839">
    <property type="term" value="C:proteasome core complex"/>
    <property type="evidence" value="ECO:0000314"/>
    <property type="project" value="UniProtKB"/>
</dbReference>
<dbReference type="GO" id="GO:0019774">
    <property type="term" value="C:proteasome core complex, beta-subunit complex"/>
    <property type="evidence" value="ECO:0000250"/>
    <property type="project" value="UniProtKB"/>
</dbReference>
<dbReference type="GO" id="GO:0001530">
    <property type="term" value="F:lipopolysaccharide binding"/>
    <property type="evidence" value="ECO:0000314"/>
    <property type="project" value="UniProtKB"/>
</dbReference>
<dbReference type="GO" id="GO:0002862">
    <property type="term" value="P:negative regulation of inflammatory response to antigenic stimulus"/>
    <property type="evidence" value="ECO:0000315"/>
    <property type="project" value="UniProtKB"/>
</dbReference>
<dbReference type="GO" id="GO:0043161">
    <property type="term" value="P:proteasome-mediated ubiquitin-dependent protein catabolic process"/>
    <property type="evidence" value="ECO:0007669"/>
    <property type="project" value="Ensembl"/>
</dbReference>
<dbReference type="CDD" id="cd03760">
    <property type="entry name" value="proteasome_beta_type_4"/>
    <property type="match status" value="1"/>
</dbReference>
<dbReference type="FunFam" id="3.60.20.10:FF:000014">
    <property type="entry name" value="Proteasome subunit beta type-7"/>
    <property type="match status" value="1"/>
</dbReference>
<dbReference type="Gene3D" id="3.60.20.10">
    <property type="entry name" value="Glutamine Phosphoribosylpyrophosphate, subunit 1, domain 1"/>
    <property type="match status" value="1"/>
</dbReference>
<dbReference type="InterPro" id="IPR029055">
    <property type="entry name" value="Ntn_hydrolases_N"/>
</dbReference>
<dbReference type="InterPro" id="IPR016295">
    <property type="entry name" value="Proteasome_beta4"/>
</dbReference>
<dbReference type="InterPro" id="IPR016050">
    <property type="entry name" value="Proteasome_bsu_CS"/>
</dbReference>
<dbReference type="InterPro" id="IPR001353">
    <property type="entry name" value="Proteasome_sua/b"/>
</dbReference>
<dbReference type="InterPro" id="IPR023333">
    <property type="entry name" value="Proteasome_suB-type"/>
</dbReference>
<dbReference type="PANTHER" id="PTHR32194">
    <property type="entry name" value="METALLOPROTEASE TLDD"/>
    <property type="match status" value="1"/>
</dbReference>
<dbReference type="PANTHER" id="PTHR32194:SF6">
    <property type="entry name" value="PROTEASOME SUBUNIT BETA"/>
    <property type="match status" value="1"/>
</dbReference>
<dbReference type="Pfam" id="PF00227">
    <property type="entry name" value="Proteasome"/>
    <property type="match status" value="1"/>
</dbReference>
<dbReference type="PIRSF" id="PIRSF001213">
    <property type="entry name" value="Psome_endopept_beta"/>
    <property type="match status" value="1"/>
</dbReference>
<dbReference type="SUPFAM" id="SSF56235">
    <property type="entry name" value="N-terminal nucleophile aminohydrolases (Ntn hydrolases)"/>
    <property type="match status" value="1"/>
</dbReference>
<dbReference type="PROSITE" id="PS00854">
    <property type="entry name" value="PROTEASOME_BETA_1"/>
    <property type="match status" value="1"/>
</dbReference>
<dbReference type="PROSITE" id="PS51476">
    <property type="entry name" value="PROTEASOME_BETA_2"/>
    <property type="match status" value="1"/>
</dbReference>
<comment type="function">
    <text evidence="3 5 7">Non-catalytic component of the 20S core proteasome complex involved in the proteolytic degradation of most intracellular proteins. This complex plays numerous essential roles within the cell by associating with different regulatory particles. Associated with two 19S regulatory particles, forms the 26S proteasome and thus participates in the ATP-dependent degradation of ubiquitinated proteins. The 26S proteasome plays a key role in the maintenance of protein homeostasis by removing misfolded or damaged proteins that could impair cellular functions, and by removing proteins whose functions are no longer required. Associated with the PA200 or PA28, the 20S proteasome mediates ubiquitin-independent protein degradation. This type of proteolysis is required in several pathways including spermatogenesis (20S-PA200 complex) or generation of a subset of MHC class I-presented antigenic peptides (20S-PA28 complex). SMAD1/OAZ1/PSMB4 complex mediates the degradation of the CREBBP/EP300 repressor SNIP1.</text>
</comment>
<comment type="subunit">
    <text evidence="1 6 7">The 26S proteasome consists of a 20S proteasome core and two 19S regulatory subunits. The 20S proteasome core is a barrel-shaped complex made of 28 subunits that are arranged in four stacked rings. The two outer rings are each formed by seven alpha subunits, and the two inner rings are formed by seven beta subunits. The proteolytic activity is exerted by three beta-subunits PSMB5, PSMB6 and PSMB7 (PubMed:16857966, PubMed:22341445). Forms a ternary complex with SMAD1 and OAZ1 before PSMB4 is incorporated into the 20S proteasome (By similarity). Interacts with PRPF19 (By similarity).</text>
</comment>
<comment type="subcellular location">
    <subcellularLocation>
        <location evidence="1">Cytoplasm</location>
    </subcellularLocation>
    <subcellularLocation>
        <location evidence="1">Nucleus</location>
    </subcellularLocation>
    <text evidence="1">Translocated from the cytoplasm into the nucleus following interaction with AKIRIN2, which bridges the proteasome with the nuclear import receptor IPO9.</text>
</comment>
<comment type="tissue specificity">
    <text evidence="7">Detected in liver (at protein level).</text>
</comment>
<comment type="induction">
    <text evidence="4">Up-regulated in liver tumor tissues (at protein level).</text>
</comment>
<comment type="similarity">
    <text evidence="2">Belongs to the peptidase T1B family.</text>
</comment>
<protein>
    <recommendedName>
        <fullName>Proteasome subunit beta type-4</fullName>
    </recommendedName>
    <alternativeName>
        <fullName>Low molecular mass protein 3</fullName>
    </alternativeName>
    <alternativeName>
        <fullName>Macropain beta chain</fullName>
    </alternativeName>
    <alternativeName>
        <fullName>Multicatalytic endopeptidase complex beta chain</fullName>
    </alternativeName>
    <alternativeName>
        <fullName>Proteasome beta chain</fullName>
    </alternativeName>
    <alternativeName>
        <fullName>Proteasome chain 3</fullName>
    </alternativeName>
    <alternativeName>
        <fullName>Proteasome subunit beta-7</fullName>
        <shortName>beta-7</shortName>
    </alternativeName>
</protein>
<gene>
    <name type="primary">Psmb4</name>
    <name type="synonym">Lmp3</name>
</gene>
<organism>
    <name type="scientific">Mus musculus</name>
    <name type="common">Mouse</name>
    <dbReference type="NCBI Taxonomy" id="10090"/>
    <lineage>
        <taxon>Eukaryota</taxon>
        <taxon>Metazoa</taxon>
        <taxon>Chordata</taxon>
        <taxon>Craniata</taxon>
        <taxon>Vertebrata</taxon>
        <taxon>Euteleostomi</taxon>
        <taxon>Mammalia</taxon>
        <taxon>Eutheria</taxon>
        <taxon>Euarchontoglires</taxon>
        <taxon>Glires</taxon>
        <taxon>Rodentia</taxon>
        <taxon>Myomorpha</taxon>
        <taxon>Muroidea</taxon>
        <taxon>Muridae</taxon>
        <taxon>Murinae</taxon>
        <taxon>Mus</taxon>
        <taxon>Mus</taxon>
    </lineage>
</organism>
<evidence type="ECO:0000250" key="1">
    <source>
        <dbReference type="UniProtKB" id="P28070"/>
    </source>
</evidence>
<evidence type="ECO:0000255" key="2">
    <source>
        <dbReference type="PROSITE-ProRule" id="PRU00809"/>
    </source>
</evidence>
<evidence type="ECO:0000269" key="3">
    <source>
    </source>
</evidence>
<evidence type="ECO:0000269" key="4">
    <source>
    </source>
</evidence>
<evidence type="ECO:0000269" key="5">
    <source>
    </source>
</evidence>
<evidence type="ECO:0000269" key="6">
    <source>
    </source>
</evidence>
<evidence type="ECO:0000269" key="7">
    <source>
    </source>
</evidence>
<evidence type="ECO:0000269" key="8">
    <source ref="4"/>
</evidence>
<evidence type="ECO:0000269" key="9">
    <source ref="5"/>
</evidence>
<evidence type="ECO:0000305" key="10"/>
<evidence type="ECO:0007829" key="11">
    <source>
        <dbReference type="PDB" id="3UNB"/>
    </source>
</evidence>
<evidence type="ECO:0007829" key="12">
    <source>
        <dbReference type="PDB" id="3UNE"/>
    </source>
</evidence>
<reference key="1">
    <citation type="journal article" date="1997" name="Gene">
        <title>Cloning and characterization of mouse Lmp3 cDNA, encoding a proteasome beta subunit.</title>
        <authorList>
            <person name="Cruz M."/>
            <person name="Nandi D."/>
            <person name="Hendil K.B."/>
            <person name="Monaco J.J."/>
        </authorList>
    </citation>
    <scope>NUCLEOTIDE SEQUENCE [MRNA]</scope>
    <source>
        <strain>B10.A</strain>
        <tissue>Macrophage</tissue>
    </source>
</reference>
<reference key="2">
    <citation type="journal article" date="2005" name="Science">
        <title>The transcriptional landscape of the mammalian genome.</title>
        <authorList>
            <person name="Carninci P."/>
            <person name="Kasukawa T."/>
            <person name="Katayama S."/>
            <person name="Gough J."/>
            <person name="Frith M.C."/>
            <person name="Maeda N."/>
            <person name="Oyama R."/>
            <person name="Ravasi T."/>
            <person name="Lenhard B."/>
            <person name="Wells C."/>
            <person name="Kodzius R."/>
            <person name="Shimokawa K."/>
            <person name="Bajic V.B."/>
            <person name="Brenner S.E."/>
            <person name="Batalov S."/>
            <person name="Forrest A.R."/>
            <person name="Zavolan M."/>
            <person name="Davis M.J."/>
            <person name="Wilming L.G."/>
            <person name="Aidinis V."/>
            <person name="Allen J.E."/>
            <person name="Ambesi-Impiombato A."/>
            <person name="Apweiler R."/>
            <person name="Aturaliya R.N."/>
            <person name="Bailey T.L."/>
            <person name="Bansal M."/>
            <person name="Baxter L."/>
            <person name="Beisel K.W."/>
            <person name="Bersano T."/>
            <person name="Bono H."/>
            <person name="Chalk A.M."/>
            <person name="Chiu K.P."/>
            <person name="Choudhary V."/>
            <person name="Christoffels A."/>
            <person name="Clutterbuck D.R."/>
            <person name="Crowe M.L."/>
            <person name="Dalla E."/>
            <person name="Dalrymple B.P."/>
            <person name="de Bono B."/>
            <person name="Della Gatta G."/>
            <person name="di Bernardo D."/>
            <person name="Down T."/>
            <person name="Engstrom P."/>
            <person name="Fagiolini M."/>
            <person name="Faulkner G."/>
            <person name="Fletcher C.F."/>
            <person name="Fukushima T."/>
            <person name="Furuno M."/>
            <person name="Futaki S."/>
            <person name="Gariboldi M."/>
            <person name="Georgii-Hemming P."/>
            <person name="Gingeras T.R."/>
            <person name="Gojobori T."/>
            <person name="Green R.E."/>
            <person name="Gustincich S."/>
            <person name="Harbers M."/>
            <person name="Hayashi Y."/>
            <person name="Hensch T.K."/>
            <person name="Hirokawa N."/>
            <person name="Hill D."/>
            <person name="Huminiecki L."/>
            <person name="Iacono M."/>
            <person name="Ikeo K."/>
            <person name="Iwama A."/>
            <person name="Ishikawa T."/>
            <person name="Jakt M."/>
            <person name="Kanapin A."/>
            <person name="Katoh M."/>
            <person name="Kawasawa Y."/>
            <person name="Kelso J."/>
            <person name="Kitamura H."/>
            <person name="Kitano H."/>
            <person name="Kollias G."/>
            <person name="Krishnan S.P."/>
            <person name="Kruger A."/>
            <person name="Kummerfeld S.K."/>
            <person name="Kurochkin I.V."/>
            <person name="Lareau L.F."/>
            <person name="Lazarevic D."/>
            <person name="Lipovich L."/>
            <person name="Liu J."/>
            <person name="Liuni S."/>
            <person name="McWilliam S."/>
            <person name="Madan Babu M."/>
            <person name="Madera M."/>
            <person name="Marchionni L."/>
            <person name="Matsuda H."/>
            <person name="Matsuzawa S."/>
            <person name="Miki H."/>
            <person name="Mignone F."/>
            <person name="Miyake S."/>
            <person name="Morris K."/>
            <person name="Mottagui-Tabar S."/>
            <person name="Mulder N."/>
            <person name="Nakano N."/>
            <person name="Nakauchi H."/>
            <person name="Ng P."/>
            <person name="Nilsson R."/>
            <person name="Nishiguchi S."/>
            <person name="Nishikawa S."/>
            <person name="Nori F."/>
            <person name="Ohara O."/>
            <person name="Okazaki Y."/>
            <person name="Orlando V."/>
            <person name="Pang K.C."/>
            <person name="Pavan W.J."/>
            <person name="Pavesi G."/>
            <person name="Pesole G."/>
            <person name="Petrovsky N."/>
            <person name="Piazza S."/>
            <person name="Reed J."/>
            <person name="Reid J.F."/>
            <person name="Ring B.Z."/>
            <person name="Ringwald M."/>
            <person name="Rost B."/>
            <person name="Ruan Y."/>
            <person name="Salzberg S.L."/>
            <person name="Sandelin A."/>
            <person name="Schneider C."/>
            <person name="Schoenbach C."/>
            <person name="Sekiguchi K."/>
            <person name="Semple C.A."/>
            <person name="Seno S."/>
            <person name="Sessa L."/>
            <person name="Sheng Y."/>
            <person name="Shibata Y."/>
            <person name="Shimada H."/>
            <person name="Shimada K."/>
            <person name="Silva D."/>
            <person name="Sinclair B."/>
            <person name="Sperling S."/>
            <person name="Stupka E."/>
            <person name="Sugiura K."/>
            <person name="Sultana R."/>
            <person name="Takenaka Y."/>
            <person name="Taki K."/>
            <person name="Tammoja K."/>
            <person name="Tan S.L."/>
            <person name="Tang S."/>
            <person name="Taylor M.S."/>
            <person name="Tegner J."/>
            <person name="Teichmann S.A."/>
            <person name="Ueda H.R."/>
            <person name="van Nimwegen E."/>
            <person name="Verardo R."/>
            <person name="Wei C.L."/>
            <person name="Yagi K."/>
            <person name="Yamanishi H."/>
            <person name="Zabarovsky E."/>
            <person name="Zhu S."/>
            <person name="Zimmer A."/>
            <person name="Hide W."/>
            <person name="Bult C."/>
            <person name="Grimmond S.M."/>
            <person name="Teasdale R.D."/>
            <person name="Liu E.T."/>
            <person name="Brusic V."/>
            <person name="Quackenbush J."/>
            <person name="Wahlestedt C."/>
            <person name="Mattick J.S."/>
            <person name="Hume D.A."/>
            <person name="Kai C."/>
            <person name="Sasaki D."/>
            <person name="Tomaru Y."/>
            <person name="Fukuda S."/>
            <person name="Kanamori-Katayama M."/>
            <person name="Suzuki M."/>
            <person name="Aoki J."/>
            <person name="Arakawa T."/>
            <person name="Iida J."/>
            <person name="Imamura K."/>
            <person name="Itoh M."/>
            <person name="Kato T."/>
            <person name="Kawaji H."/>
            <person name="Kawagashira N."/>
            <person name="Kawashima T."/>
            <person name="Kojima M."/>
            <person name="Kondo S."/>
            <person name="Konno H."/>
            <person name="Nakano K."/>
            <person name="Ninomiya N."/>
            <person name="Nishio T."/>
            <person name="Okada M."/>
            <person name="Plessy C."/>
            <person name="Shibata K."/>
            <person name="Shiraki T."/>
            <person name="Suzuki S."/>
            <person name="Tagami M."/>
            <person name="Waki K."/>
            <person name="Watahiki A."/>
            <person name="Okamura-Oho Y."/>
            <person name="Suzuki H."/>
            <person name="Kawai J."/>
            <person name="Hayashizaki Y."/>
        </authorList>
    </citation>
    <scope>NUCLEOTIDE SEQUENCE [LARGE SCALE MRNA]</scope>
    <source>
        <strain>BALB/cJ</strain>
        <strain>C57BL/6J</strain>
        <strain>NOD</strain>
        <tissue>Spleen</tissue>
    </source>
</reference>
<reference key="3">
    <citation type="journal article" date="2004" name="Genome Res.">
        <title>The status, quality, and expansion of the NIH full-length cDNA project: the Mammalian Gene Collection (MGC).</title>
        <authorList>
            <consortium name="The MGC Project Team"/>
        </authorList>
    </citation>
    <scope>NUCLEOTIDE SEQUENCE [LARGE SCALE MRNA]</scope>
    <source>
        <strain>NMRI</strain>
        <tissue>Mammary tumor</tissue>
    </source>
</reference>
<reference key="4">
    <citation type="submission" date="2007-04" db="UniProtKB">
        <authorList>
            <person name="Lubec G."/>
            <person name="Klug S."/>
            <person name="Kang S.U."/>
        </authorList>
    </citation>
    <scope>PROTEIN SEQUENCE OF 46-80; 110-131 AND 232-240</scope>
    <scope>IDENTIFICATION BY MASS SPECTROMETRY</scope>
    <source>
        <strain>C57BL/6J</strain>
        <tissue>Brain</tissue>
        <tissue>Hippocampus</tissue>
    </source>
</reference>
<reference key="5">
    <citation type="submission" date="1998-08" db="UniProtKB">
        <authorList>
            <person name="Sanchez J.-C."/>
            <person name="Rouge V."/>
            <person name="Frutiger S."/>
            <person name="Hughes G."/>
            <person name="Yan J.X."/>
            <person name="Hoogland C."/>
            <person name="Appel R.D."/>
            <person name="Binz P.-A."/>
            <person name="Hochstrasser D.F."/>
            <person name="Cowthorne M."/>
        </authorList>
    </citation>
    <scope>PROTEIN SEQUENCE OF 46-51</scope>
    <source>
        <tissue>Liver</tissue>
    </source>
</reference>
<reference key="6">
    <citation type="submission" date="1991-08" db="EMBL/GenBank/DDBJ databases">
        <authorList>
            <person name="Wang B."/>
            <person name="Hunsperger J."/>
            <person name="Laib J."/>
            <person name="Fan D."/>
        </authorList>
    </citation>
    <scope>NUCLEOTIDE SEQUENCE [MRNA] OF 95-112</scope>
    <source>
        <strain>C57BL/6J</strain>
    </source>
</reference>
<reference key="7">
    <citation type="journal article" date="2003" name="J. Immunol.">
        <title>The proteasome as a lipopolysaccharide-binding protein in macrophages: differential effects of proteasome inhibition on lipopolysaccharide-induced signaling events.</title>
        <authorList>
            <person name="Qureshi N."/>
            <person name="Perera P.-Y."/>
            <person name="Shen J."/>
            <person name="Zhang G."/>
            <person name="Lenschat A."/>
            <person name="Splitter G."/>
            <person name="Morrison D.C."/>
            <person name="Vogel S.N."/>
        </authorList>
    </citation>
    <scope>FUNCTION</scope>
</reference>
<reference key="8">
    <citation type="journal article" date="2006" name="Mol. Cell. Biol.">
        <title>Proteasome activator PA200 is required for normal spermatogenesis.</title>
        <authorList>
            <person name="Khor B."/>
            <person name="Bredemeyer A.L."/>
            <person name="Huang C.-Y."/>
            <person name="Turnbull I.R."/>
            <person name="Evans R."/>
            <person name="Maggi L.B. Jr."/>
            <person name="White J.M."/>
            <person name="Walker L.M."/>
            <person name="Carnes K."/>
            <person name="Hess R.A."/>
            <person name="Sleckman B.P."/>
        </authorList>
    </citation>
    <scope>FUNCTION</scope>
</reference>
<reference key="9">
    <citation type="journal article" date="2006" name="Proteomics">
        <title>The up-regulation of proteasome subunits and lysosomal proteases in hepatocellular carcinomas of the HBx gene knockin transgenic mice.</title>
        <authorList>
            <person name="Cui F."/>
            <person name="Wang Y."/>
            <person name="Wang J."/>
            <person name="Wei K."/>
            <person name="Hu J."/>
            <person name="Liu F."/>
            <person name="Wang H."/>
            <person name="Zhao X."/>
            <person name="Zhang X."/>
            <person name="Yang X."/>
        </authorList>
    </citation>
    <scope>INDUCTION</scope>
    <scope>IDENTIFICATION BY MASS SPECTROMETRY</scope>
</reference>
<reference key="10">
    <citation type="journal article" date="2006" name="Circ. Res.">
        <title>Mapping the murine cardiac 26S proteasome complexes.</title>
        <authorList>
            <person name="Gomes A.V."/>
            <person name="Zong C."/>
            <person name="Edmondson R.D."/>
            <person name="Li X."/>
            <person name="Stefani E."/>
            <person name="Zhang J."/>
            <person name="Jones R.C."/>
            <person name="Thyparambil S."/>
            <person name="Wang G.W."/>
            <person name="Qiao X."/>
            <person name="Bardag-Gorce F."/>
            <person name="Ping P."/>
        </authorList>
    </citation>
    <scope>IDENTIFICATION IN THE 20S PROTEASOME CORE COMPLEX</scope>
</reference>
<reference key="11">
    <citation type="journal article" date="2010" name="Cell">
        <title>A tissue-specific atlas of mouse protein phosphorylation and expression.</title>
        <authorList>
            <person name="Huttlin E.L."/>
            <person name="Jedrychowski M.P."/>
            <person name="Elias J.E."/>
            <person name="Goswami T."/>
            <person name="Rad R."/>
            <person name="Beausoleil S.A."/>
            <person name="Villen J."/>
            <person name="Haas W."/>
            <person name="Sowa M.E."/>
            <person name="Gygi S.P."/>
        </authorList>
    </citation>
    <scope>IDENTIFICATION BY MASS SPECTROMETRY [LARGE SCALE ANALYSIS]</scope>
    <source>
        <tissue>Brain</tissue>
        <tissue>Brown adipose tissue</tissue>
        <tissue>Heart</tissue>
        <tissue>Kidney</tissue>
        <tissue>Liver</tissue>
        <tissue>Lung</tissue>
        <tissue>Pancreas</tissue>
        <tissue>Spleen</tissue>
        <tissue>Testis</tissue>
    </source>
</reference>
<reference key="12">
    <citation type="journal article" date="2012" name="Cell">
        <title>Immuno- and constitutive proteasome crystal structures reveal differences in substrate and inhibitor specificity.</title>
        <authorList>
            <person name="Huber E.M."/>
            <person name="Basler M."/>
            <person name="Schwab R."/>
            <person name="Heinemeyer W."/>
            <person name="Kirk C.J."/>
            <person name="Groettrup M."/>
            <person name="Groll M."/>
        </authorList>
    </citation>
    <scope>X-RAY CRYSTALLOGRAPHY (2.90 ANGSTROMS) OF 20S IMMUNOPROTEASOME</scope>
    <scope>SUBUNIT</scope>
    <scope>FUNCTION</scope>
    <scope>TISSUE SPECIFICITY</scope>
</reference>
<sequence length="264" mass="29116">MEAFWESRAGHWAGGPAPGQFYRIPATPSGLMDPASAPCEGPITRTQNPMVTGTSVLGVKFDGGVVIAADMLGSYGSLARFRNISRIMRVNDSTMLGASGDYADFQYLKQVLGQMVIDEELLGDGHSYSPRAIHSWLTRAMYSRRSKMNPLWNTMVIGGYADGESFLGYVDMLGVAYEAPSLATGYGAYLAQPLLREVLEKQPVLSQTEARELVERCMRVLYYRDARSYNRFQIATVTEKGVEIEGPLSAQTNWDIAHMISGFE</sequence>